<sequence length="540" mass="60389">MDSQRNILLIALALVSFLLFQQWQVAKNPAPQAVEQAQSSSSLPAPSFADELDPVPGQQQASAKTITVTTDVLTLSIDTVGGDVVHADLNQYSAELDSSDPFVLLKDTQGHQFIAQSGLVGPQGIDLSSSNRPHYNVSADSFTLADGQDELRVPMTFTANGIEYTKTYVLKRGSYALNVEYDVANNSGNNATFGMYAHLRQNLMDAGGSITMPTYRGGAYSTEDTRYKKYSFEDMQDRNLSINLADGQGWAAMIQHYFAAAWIPRNEPGTNLYTRVIGNLGDIGVRMPNKTIATGDQAKFEATLWVGPKLQQEMAAVAPNLDLVVDYGWLWFIAKPLHSLLAFIQSFVGNWGVAIICLTFIVRGAMYPLTKAQYTSMAKMRMLQPKLQAMRERIGDDRQRMSQEMMELYKKEKVNPLGGCLPLVLQMPIFIALYWALMESVELRHSPFFGWIHDLSAQDPYYILPLLMGASMFLIQKMSPTTVTDPMQQKIMTFMPVMFTFFFLFFPSGLVLYWLVSNIVTLIQQTLIYKALEKKGLHTK</sequence>
<reference key="1">
    <citation type="journal article" date="2003" name="Lancet">
        <title>Genome sequence of Vibrio parahaemolyticus: a pathogenic mechanism distinct from that of V. cholerae.</title>
        <authorList>
            <person name="Makino K."/>
            <person name="Oshima K."/>
            <person name="Kurokawa K."/>
            <person name="Yokoyama K."/>
            <person name="Uda T."/>
            <person name="Tagomori K."/>
            <person name="Iijima Y."/>
            <person name="Najima M."/>
            <person name="Nakano M."/>
            <person name="Yamashita A."/>
            <person name="Kubota Y."/>
            <person name="Kimura S."/>
            <person name="Yasunaga T."/>
            <person name="Honda T."/>
            <person name="Shinagawa H."/>
            <person name="Hattori M."/>
            <person name="Iida T."/>
        </authorList>
    </citation>
    <scope>NUCLEOTIDE SEQUENCE [LARGE SCALE GENOMIC DNA]</scope>
    <source>
        <strain>RIMD 2210633</strain>
    </source>
</reference>
<feature type="chain" id="PRO_0000124766" description="Membrane protein insertase YidC">
    <location>
        <begin position="1"/>
        <end position="540"/>
    </location>
</feature>
<feature type="transmembrane region" description="Helical" evidence="1">
    <location>
        <begin position="6"/>
        <end position="26"/>
    </location>
</feature>
<feature type="transmembrane region" description="Helical" evidence="1">
    <location>
        <begin position="342"/>
        <end position="362"/>
    </location>
</feature>
<feature type="transmembrane region" description="Helical" evidence="1">
    <location>
        <begin position="417"/>
        <end position="437"/>
    </location>
</feature>
<feature type="transmembrane region" description="Helical" evidence="1">
    <location>
        <begin position="455"/>
        <end position="475"/>
    </location>
</feature>
<feature type="transmembrane region" description="Helical" evidence="1">
    <location>
        <begin position="496"/>
        <end position="516"/>
    </location>
</feature>
<feature type="region of interest" description="Disordered" evidence="2">
    <location>
        <begin position="36"/>
        <end position="63"/>
    </location>
</feature>
<feature type="compositionally biased region" description="Low complexity" evidence="2">
    <location>
        <begin position="36"/>
        <end position="47"/>
    </location>
</feature>
<keyword id="KW-0997">Cell inner membrane</keyword>
<keyword id="KW-1003">Cell membrane</keyword>
<keyword id="KW-0143">Chaperone</keyword>
<keyword id="KW-0472">Membrane</keyword>
<keyword id="KW-0653">Protein transport</keyword>
<keyword id="KW-0812">Transmembrane</keyword>
<keyword id="KW-1133">Transmembrane helix</keyword>
<keyword id="KW-0813">Transport</keyword>
<name>YIDC_VIBPA</name>
<organism>
    <name type="scientific">Vibrio parahaemolyticus serotype O3:K6 (strain RIMD 2210633)</name>
    <dbReference type="NCBI Taxonomy" id="223926"/>
    <lineage>
        <taxon>Bacteria</taxon>
        <taxon>Pseudomonadati</taxon>
        <taxon>Pseudomonadota</taxon>
        <taxon>Gammaproteobacteria</taxon>
        <taxon>Vibrionales</taxon>
        <taxon>Vibrionaceae</taxon>
        <taxon>Vibrio</taxon>
    </lineage>
</organism>
<protein>
    <recommendedName>
        <fullName evidence="1">Membrane protein insertase YidC</fullName>
    </recommendedName>
    <alternativeName>
        <fullName evidence="1">Foldase YidC</fullName>
    </alternativeName>
    <alternativeName>
        <fullName evidence="1">Membrane integrase YidC</fullName>
    </alternativeName>
    <alternativeName>
        <fullName evidence="1">Membrane protein YidC</fullName>
    </alternativeName>
</protein>
<evidence type="ECO:0000255" key="1">
    <source>
        <dbReference type="HAMAP-Rule" id="MF_01810"/>
    </source>
</evidence>
<evidence type="ECO:0000256" key="2">
    <source>
        <dbReference type="SAM" id="MobiDB-lite"/>
    </source>
</evidence>
<comment type="function">
    <text evidence="1">Required for the insertion and/or proper folding and/or complex formation of integral membrane proteins into the membrane. Involved in integration of membrane proteins that insert both dependently and independently of the Sec translocase complex, as well as at least some lipoproteins. Aids folding of multispanning membrane proteins.</text>
</comment>
<comment type="subunit">
    <text evidence="1">Interacts with the Sec translocase complex via SecD. Specifically interacts with transmembrane segments of nascent integral membrane proteins during membrane integration.</text>
</comment>
<comment type="subcellular location">
    <subcellularLocation>
        <location evidence="1">Cell inner membrane</location>
        <topology evidence="1">Multi-pass membrane protein</topology>
    </subcellularLocation>
</comment>
<comment type="similarity">
    <text evidence="1">Belongs to the OXA1/ALB3/YidC family. Type 1 subfamily.</text>
</comment>
<accession>Q87TR5</accession>
<proteinExistence type="inferred from homology"/>
<gene>
    <name evidence="1" type="primary">yidC</name>
    <name type="ordered locus">VP0003</name>
</gene>
<dbReference type="EMBL" id="BA000031">
    <property type="protein sequence ID" value="BAC58266.1"/>
    <property type="molecule type" value="Genomic_DNA"/>
</dbReference>
<dbReference type="RefSeq" id="NP_796382.1">
    <property type="nucleotide sequence ID" value="NC_004603.1"/>
</dbReference>
<dbReference type="RefSeq" id="WP_005458471.1">
    <property type="nucleotide sequence ID" value="NC_004603.1"/>
</dbReference>
<dbReference type="SMR" id="Q87TR5"/>
<dbReference type="GeneID" id="1187459"/>
<dbReference type="KEGG" id="vpa:VP0003"/>
<dbReference type="PATRIC" id="fig|223926.6.peg.3"/>
<dbReference type="eggNOG" id="COG0706">
    <property type="taxonomic scope" value="Bacteria"/>
</dbReference>
<dbReference type="HOGENOM" id="CLU_016535_3_0_6"/>
<dbReference type="Proteomes" id="UP000002493">
    <property type="component" value="Chromosome 1"/>
</dbReference>
<dbReference type="GO" id="GO:0005886">
    <property type="term" value="C:plasma membrane"/>
    <property type="evidence" value="ECO:0007669"/>
    <property type="project" value="UniProtKB-SubCell"/>
</dbReference>
<dbReference type="GO" id="GO:0032977">
    <property type="term" value="F:membrane insertase activity"/>
    <property type="evidence" value="ECO:0007669"/>
    <property type="project" value="InterPro"/>
</dbReference>
<dbReference type="GO" id="GO:0051205">
    <property type="term" value="P:protein insertion into membrane"/>
    <property type="evidence" value="ECO:0007669"/>
    <property type="project" value="TreeGrafter"/>
</dbReference>
<dbReference type="GO" id="GO:0015031">
    <property type="term" value="P:protein transport"/>
    <property type="evidence" value="ECO:0007669"/>
    <property type="project" value="UniProtKB-KW"/>
</dbReference>
<dbReference type="CDD" id="cd20070">
    <property type="entry name" value="5TM_YidC_Alb3"/>
    <property type="match status" value="1"/>
</dbReference>
<dbReference type="CDD" id="cd19961">
    <property type="entry name" value="EcYidC-like_peri"/>
    <property type="match status" value="1"/>
</dbReference>
<dbReference type="Gene3D" id="2.70.98.90">
    <property type="match status" value="1"/>
</dbReference>
<dbReference type="HAMAP" id="MF_01810">
    <property type="entry name" value="YidC_type1"/>
    <property type="match status" value="1"/>
</dbReference>
<dbReference type="InterPro" id="IPR019998">
    <property type="entry name" value="Membr_insert_YidC"/>
</dbReference>
<dbReference type="InterPro" id="IPR028053">
    <property type="entry name" value="Membr_insert_YidC_N"/>
</dbReference>
<dbReference type="InterPro" id="IPR001708">
    <property type="entry name" value="YidC/ALB3/OXA1/COX18"/>
</dbReference>
<dbReference type="InterPro" id="IPR028055">
    <property type="entry name" value="YidC/Oxa/ALB_C"/>
</dbReference>
<dbReference type="InterPro" id="IPR047196">
    <property type="entry name" value="YidC_ALB_C"/>
</dbReference>
<dbReference type="InterPro" id="IPR038221">
    <property type="entry name" value="YidC_periplasmic_sf"/>
</dbReference>
<dbReference type="NCBIfam" id="NF002351">
    <property type="entry name" value="PRK01318.1-1"/>
    <property type="match status" value="1"/>
</dbReference>
<dbReference type="NCBIfam" id="NF002352">
    <property type="entry name" value="PRK01318.1-3"/>
    <property type="match status" value="1"/>
</dbReference>
<dbReference type="NCBIfam" id="TIGR03593">
    <property type="entry name" value="yidC_nterm"/>
    <property type="match status" value="1"/>
</dbReference>
<dbReference type="NCBIfam" id="TIGR03592">
    <property type="entry name" value="yidC_oxa1_cterm"/>
    <property type="match status" value="1"/>
</dbReference>
<dbReference type="PANTHER" id="PTHR12428:SF65">
    <property type="entry name" value="CYTOCHROME C OXIDASE ASSEMBLY PROTEIN COX18, MITOCHONDRIAL"/>
    <property type="match status" value="1"/>
</dbReference>
<dbReference type="PANTHER" id="PTHR12428">
    <property type="entry name" value="OXA1"/>
    <property type="match status" value="1"/>
</dbReference>
<dbReference type="Pfam" id="PF02096">
    <property type="entry name" value="60KD_IMP"/>
    <property type="match status" value="1"/>
</dbReference>
<dbReference type="Pfam" id="PF14849">
    <property type="entry name" value="YidC_periplas"/>
    <property type="match status" value="1"/>
</dbReference>
<dbReference type="PRINTS" id="PR00701">
    <property type="entry name" value="60KDINNERMP"/>
</dbReference>
<dbReference type="PRINTS" id="PR01900">
    <property type="entry name" value="YIDCPROTEIN"/>
</dbReference>